<dbReference type="EC" id="3.1.6.14" evidence="3"/>
<dbReference type="EMBL" id="BC115990">
    <property type="protein sequence ID" value="AAI15991.1"/>
    <property type="molecule type" value="mRNA"/>
</dbReference>
<dbReference type="RefSeq" id="NP_001069030.1">
    <property type="nucleotide sequence ID" value="NM_001075562.2"/>
</dbReference>
<dbReference type="SMR" id="Q1LZH9"/>
<dbReference type="FunCoup" id="Q1LZH9">
    <property type="interactions" value="640"/>
</dbReference>
<dbReference type="STRING" id="9913.ENSBTAP00000023218"/>
<dbReference type="GlyCosmos" id="Q1LZH9">
    <property type="glycosylation" value="13 sites, No reported glycans"/>
</dbReference>
<dbReference type="GlyGen" id="Q1LZH9">
    <property type="glycosylation" value="13 sites"/>
</dbReference>
<dbReference type="PaxDb" id="9913-ENSBTAP00000023218"/>
<dbReference type="GeneID" id="512444"/>
<dbReference type="KEGG" id="bta:512444"/>
<dbReference type="CTD" id="2799"/>
<dbReference type="eggNOG" id="KOG3731">
    <property type="taxonomic scope" value="Eukaryota"/>
</dbReference>
<dbReference type="InParanoid" id="Q1LZH9"/>
<dbReference type="OrthoDB" id="96314at2759"/>
<dbReference type="Proteomes" id="UP000009136">
    <property type="component" value="Unplaced"/>
</dbReference>
<dbReference type="GO" id="GO:0005764">
    <property type="term" value="C:lysosome"/>
    <property type="evidence" value="ECO:0007669"/>
    <property type="project" value="UniProtKB-SubCell"/>
</dbReference>
<dbReference type="GO" id="GO:0005539">
    <property type="term" value="F:glycosaminoglycan binding"/>
    <property type="evidence" value="ECO:0000318"/>
    <property type="project" value="GO_Central"/>
</dbReference>
<dbReference type="GO" id="GO:0046872">
    <property type="term" value="F:metal ion binding"/>
    <property type="evidence" value="ECO:0007669"/>
    <property type="project" value="UniProtKB-KW"/>
</dbReference>
<dbReference type="GO" id="GO:0008449">
    <property type="term" value="F:N-acetylglucosamine-6-sulfatase activity"/>
    <property type="evidence" value="ECO:0000318"/>
    <property type="project" value="GO_Central"/>
</dbReference>
<dbReference type="GO" id="GO:0030203">
    <property type="term" value="P:glycosaminoglycan metabolic process"/>
    <property type="evidence" value="ECO:0007669"/>
    <property type="project" value="InterPro"/>
</dbReference>
<dbReference type="CDD" id="cd16147">
    <property type="entry name" value="G6S"/>
    <property type="match status" value="1"/>
</dbReference>
<dbReference type="FunFam" id="3.40.720.10:FF:000012">
    <property type="entry name" value="N-acetylglucosamine-6-sulfatase"/>
    <property type="match status" value="1"/>
</dbReference>
<dbReference type="Gene3D" id="3.40.720.10">
    <property type="entry name" value="Alkaline Phosphatase, subunit A"/>
    <property type="match status" value="1"/>
</dbReference>
<dbReference type="InterPro" id="IPR017850">
    <property type="entry name" value="Alkaline_phosphatase_core_sf"/>
</dbReference>
<dbReference type="InterPro" id="IPR012251">
    <property type="entry name" value="GlcNAc_6-SO4ase"/>
</dbReference>
<dbReference type="InterPro" id="IPR024607">
    <property type="entry name" value="Sulfatase_CS"/>
</dbReference>
<dbReference type="InterPro" id="IPR000917">
    <property type="entry name" value="Sulfatase_N"/>
</dbReference>
<dbReference type="PANTHER" id="PTHR43108:SF5">
    <property type="entry name" value="N-ACETYLGLUCOSAMINE-6-SULFATASE"/>
    <property type="match status" value="1"/>
</dbReference>
<dbReference type="PANTHER" id="PTHR43108">
    <property type="entry name" value="N-ACETYLGLUCOSAMINE-6-SULFATASE FAMILY MEMBER"/>
    <property type="match status" value="1"/>
</dbReference>
<dbReference type="Pfam" id="PF00884">
    <property type="entry name" value="Sulfatase"/>
    <property type="match status" value="1"/>
</dbReference>
<dbReference type="PIRSF" id="PIRSF036666">
    <property type="entry name" value="G6S"/>
    <property type="match status" value="1"/>
</dbReference>
<dbReference type="SUPFAM" id="SSF53649">
    <property type="entry name" value="Alkaline phosphatase-like"/>
    <property type="match status" value="1"/>
</dbReference>
<dbReference type="PROSITE" id="PS00523">
    <property type="entry name" value="SULFATASE_1"/>
    <property type="match status" value="1"/>
</dbReference>
<dbReference type="PROSITE" id="PS00149">
    <property type="entry name" value="SULFATASE_2"/>
    <property type="match status" value="1"/>
</dbReference>
<organism>
    <name type="scientific">Bos taurus</name>
    <name type="common">Bovine</name>
    <dbReference type="NCBI Taxonomy" id="9913"/>
    <lineage>
        <taxon>Eukaryota</taxon>
        <taxon>Metazoa</taxon>
        <taxon>Chordata</taxon>
        <taxon>Craniata</taxon>
        <taxon>Vertebrata</taxon>
        <taxon>Euteleostomi</taxon>
        <taxon>Mammalia</taxon>
        <taxon>Eutheria</taxon>
        <taxon>Laurasiatheria</taxon>
        <taxon>Artiodactyla</taxon>
        <taxon>Ruminantia</taxon>
        <taxon>Pecora</taxon>
        <taxon>Bovidae</taxon>
        <taxon>Bovinae</taxon>
        <taxon>Bos</taxon>
    </lineage>
</organism>
<proteinExistence type="evidence at transcript level"/>
<sequence>MRLLSLAPDRPRRGGPRHLTSGSPALPPPPPLLLLLLLLGGCLGVSGAAKSSRRPNVVLLLADDQDEVLGGMTPLKKTKALIGEMGMTFSSAYVPSALCCPSRASILTGKYPHNLHVVNNTLEGNCSSKSWQKIQEPNTFPAILRSMCGYQTFFAGKYLNEYGAPDAGGLGHVPLGWSYWYALEKNSKYYNYTLSINGKARKHGENYSVDYLTDVLANVSLDFLDYKSNSEPFFMMISTPAPHSPWTAAPQYQNAFQNVFAPRNKNFNIHGTNKHWLIRQAKTPMTNSSIQFLDNAFRKRWQTLLSVDDLVEKLVKRLEFNGELNNTYIFYTSDNGYHTGQFSLPIDKRQLYEFDIKVPLLVRGPGIKPNQTSKMLVANIDLGPTILDIAGYSLNKTQMDGMSFLPILKGASNLTWRSDVLVEYQGEGRNVTDPTCPSLSPGVSQCFPDCVCEDAYNNTYACVRTMSERWNLQYCEFDDQEVFVEVYNLTADPHQLNNIAKSIDPELLGKMNYRLMMLQSCSGPTCRTPGVFDPGYRFDPRLMFSNHGSVRTRRFSKHLL</sequence>
<keyword id="KW-0106">Calcium</keyword>
<keyword id="KW-0325">Glycoprotein</keyword>
<keyword id="KW-0378">Hydrolase</keyword>
<keyword id="KW-0458">Lysosome</keyword>
<keyword id="KW-0479">Metal-binding</keyword>
<keyword id="KW-0597">Phosphoprotein</keyword>
<keyword id="KW-1185">Reference proteome</keyword>
<keyword id="KW-0732">Signal</keyword>
<gene>
    <name type="primary">GNS</name>
</gene>
<feature type="signal peptide" evidence="4">
    <location>
        <begin position="1"/>
        <end position="48"/>
    </location>
</feature>
<feature type="chain" id="PRO_0000273188" description="N-acetylglucosamine-6-sulfatase">
    <location>
        <begin position="49"/>
        <end position="560"/>
    </location>
</feature>
<feature type="region of interest" description="Disordered" evidence="5">
    <location>
        <begin position="1"/>
        <end position="25"/>
    </location>
</feature>
<feature type="active site" description="Nucleophile" evidence="2">
    <location>
        <position position="99"/>
    </location>
</feature>
<feature type="binding site" evidence="2">
    <location>
        <position position="63"/>
    </location>
    <ligand>
        <name>Ca(2+)</name>
        <dbReference type="ChEBI" id="CHEBI:29108"/>
    </ligand>
</feature>
<feature type="binding site" evidence="2">
    <location>
        <position position="64"/>
    </location>
    <ligand>
        <name>Ca(2+)</name>
        <dbReference type="ChEBI" id="CHEBI:29108"/>
    </ligand>
</feature>
<feature type="binding site" description="via 3-oxoalanine" evidence="2">
    <location>
        <position position="99"/>
    </location>
    <ligand>
        <name>Ca(2+)</name>
        <dbReference type="ChEBI" id="CHEBI:29108"/>
    </ligand>
</feature>
<feature type="binding site" evidence="2">
    <location>
        <position position="334"/>
    </location>
    <ligand>
        <name>Ca(2+)</name>
        <dbReference type="ChEBI" id="CHEBI:29108"/>
    </ligand>
</feature>
<feature type="binding site" evidence="2">
    <location>
        <position position="335"/>
    </location>
    <ligand>
        <name>Ca(2+)</name>
        <dbReference type="ChEBI" id="CHEBI:29108"/>
    </ligand>
</feature>
<feature type="modified residue" description="3-oxoalanine (Cys)" evidence="2">
    <location>
        <position position="99"/>
    </location>
</feature>
<feature type="modified residue" description="Phosphoserine" evidence="3">
    <location>
        <position position="549"/>
    </location>
</feature>
<feature type="glycosylation site" description="N-linked (GlcNAc...) asparagine" evidence="4">
    <location>
        <position position="119"/>
    </location>
</feature>
<feature type="glycosylation site" description="N-linked (GlcNAc...) asparagine" evidence="4">
    <location>
        <position position="125"/>
    </location>
</feature>
<feature type="glycosylation site" description="N-linked (GlcNAc...) asparagine" evidence="4">
    <location>
        <position position="191"/>
    </location>
</feature>
<feature type="glycosylation site" description="N-linked (GlcNAc...) asparagine" evidence="4">
    <location>
        <position position="206"/>
    </location>
</feature>
<feature type="glycosylation site" description="N-linked (GlcNAc...) asparagine" evidence="4">
    <location>
        <position position="218"/>
    </location>
</feature>
<feature type="glycosylation site" description="N-linked (GlcNAc...) asparagine" evidence="4">
    <location>
        <position position="287"/>
    </location>
</feature>
<feature type="glycosylation site" description="N-linked (GlcNAc...) asparagine" evidence="4">
    <location>
        <position position="325"/>
    </location>
</feature>
<feature type="glycosylation site" description="N-linked (GlcNAc...) asparagine" evidence="4">
    <location>
        <position position="370"/>
    </location>
</feature>
<feature type="glycosylation site" description="N-linked (GlcNAc...) asparagine" evidence="4">
    <location>
        <position position="395"/>
    </location>
</feature>
<feature type="glycosylation site" description="N-linked (GlcNAc...) asparagine" evidence="4">
    <location>
        <position position="413"/>
    </location>
</feature>
<feature type="glycosylation site" description="N-linked (GlcNAc...) asparagine" evidence="4">
    <location>
        <position position="430"/>
    </location>
</feature>
<feature type="glycosylation site" description="N-linked (GlcNAc...) asparagine" evidence="4">
    <location>
        <position position="457"/>
    </location>
</feature>
<feature type="glycosylation site" description="N-linked (GlcNAc...) asparagine" evidence="4">
    <location>
        <position position="488"/>
    </location>
</feature>
<name>GNS_BOVIN</name>
<evidence type="ECO:0000250" key="1"/>
<evidence type="ECO:0000250" key="2">
    <source>
        <dbReference type="UniProtKB" id="P15289"/>
    </source>
</evidence>
<evidence type="ECO:0000250" key="3">
    <source>
        <dbReference type="UniProtKB" id="P15586"/>
    </source>
</evidence>
<evidence type="ECO:0000255" key="4"/>
<evidence type="ECO:0000256" key="5">
    <source>
        <dbReference type="SAM" id="MobiDB-lite"/>
    </source>
</evidence>
<evidence type="ECO:0000305" key="6"/>
<reference key="1">
    <citation type="submission" date="2006-05" db="EMBL/GenBank/DDBJ databases">
        <authorList>
            <consortium name="NIH - Mammalian Gene Collection (MGC) project"/>
        </authorList>
    </citation>
    <scope>NUCLEOTIDE SEQUENCE [LARGE SCALE MRNA]</scope>
    <source>
        <strain>Hereford</strain>
        <tissue>Heart ventricle</tissue>
    </source>
</reference>
<comment type="function">
    <text evidence="3">Hydrolyzes 6-sulfate groups in N-acetyl-d-glucosaminide units of heparin sulfate and keratan sulfate.</text>
</comment>
<comment type="catalytic activity">
    <reaction evidence="3">
        <text>Hydrolysis of the 6-sulfate groups of the N-acetyl-D-glucosamine 6-sulfate units of heparan sulfate and keratan sulfate.</text>
        <dbReference type="EC" id="3.1.6.14"/>
    </reaction>
</comment>
<comment type="cofactor">
    <cofactor evidence="2">
        <name>Ca(2+)</name>
        <dbReference type="ChEBI" id="CHEBI:29108"/>
    </cofactor>
    <text evidence="2">Binds 1 Ca(2+) ion per subunit.</text>
</comment>
<comment type="subcellular location">
    <subcellularLocation>
        <location evidence="1">Lysosome</location>
    </subcellularLocation>
</comment>
<comment type="PTM">
    <text evidence="1">The conversion to 3-oxoalanine (also known as C-formylglycine, FGly), of a serine or cysteine residue in prokaryotes and of a cysteine residue in eukaryotes, is critical for catalytic activity.</text>
</comment>
<comment type="similarity">
    <text evidence="6">Belongs to the sulfatase family.</text>
</comment>
<accession>Q1LZH9</accession>
<protein>
    <recommendedName>
        <fullName>N-acetylglucosamine-6-sulfatase</fullName>
        <ecNumber evidence="3">3.1.6.14</ecNumber>
    </recommendedName>
    <alternativeName>
        <fullName>Glucosamine-6-sulfatase</fullName>
        <shortName>G6S</shortName>
    </alternativeName>
</protein>